<reference key="1">
    <citation type="journal article" date="2003" name="J. Plant Res.">
        <title>Phylogenetic relationships among genera of Massonieae (Hyacinthaceae) inferred from plastid DNA and seed morphology.</title>
        <authorList>
            <person name="Pfosser M.F."/>
            <person name="Wetschnig W."/>
            <person name="Ungar S."/>
            <person name="Prenner G."/>
        </authorList>
    </citation>
    <scope>NUCLEOTIDE SEQUENCE [GENOMIC DNA]</scope>
</reference>
<gene>
    <name evidence="1" type="primary">atpB</name>
</gene>
<dbReference type="EC" id="7.1.2.2" evidence="1"/>
<dbReference type="EMBL" id="AJ508215">
    <property type="protein sequence ID" value="CAD48412.1"/>
    <property type="molecule type" value="Genomic_DNA"/>
</dbReference>
<dbReference type="SMR" id="Q85V28"/>
<dbReference type="GO" id="GO:0009535">
    <property type="term" value="C:chloroplast thylakoid membrane"/>
    <property type="evidence" value="ECO:0007669"/>
    <property type="project" value="UniProtKB-SubCell"/>
</dbReference>
<dbReference type="GO" id="GO:0005739">
    <property type="term" value="C:mitochondrion"/>
    <property type="evidence" value="ECO:0007669"/>
    <property type="project" value="GOC"/>
</dbReference>
<dbReference type="GO" id="GO:0045259">
    <property type="term" value="C:proton-transporting ATP synthase complex"/>
    <property type="evidence" value="ECO:0007669"/>
    <property type="project" value="UniProtKB-KW"/>
</dbReference>
<dbReference type="GO" id="GO:0005524">
    <property type="term" value="F:ATP binding"/>
    <property type="evidence" value="ECO:0007669"/>
    <property type="project" value="UniProtKB-UniRule"/>
</dbReference>
<dbReference type="GO" id="GO:0016887">
    <property type="term" value="F:ATP hydrolysis activity"/>
    <property type="evidence" value="ECO:0007669"/>
    <property type="project" value="InterPro"/>
</dbReference>
<dbReference type="GO" id="GO:0046933">
    <property type="term" value="F:proton-transporting ATP synthase activity, rotational mechanism"/>
    <property type="evidence" value="ECO:0007669"/>
    <property type="project" value="UniProtKB-UniRule"/>
</dbReference>
<dbReference type="GO" id="GO:0042776">
    <property type="term" value="P:proton motive force-driven mitochondrial ATP synthesis"/>
    <property type="evidence" value="ECO:0007669"/>
    <property type="project" value="TreeGrafter"/>
</dbReference>
<dbReference type="CDD" id="cd18110">
    <property type="entry name" value="ATP-synt_F1_beta_C"/>
    <property type="match status" value="1"/>
</dbReference>
<dbReference type="CDD" id="cd18115">
    <property type="entry name" value="ATP-synt_F1_beta_N"/>
    <property type="match status" value="1"/>
</dbReference>
<dbReference type="CDD" id="cd01133">
    <property type="entry name" value="F1-ATPase_beta_CD"/>
    <property type="match status" value="1"/>
</dbReference>
<dbReference type="FunFam" id="1.10.1140.10:FF:000001">
    <property type="entry name" value="ATP synthase subunit beta"/>
    <property type="match status" value="1"/>
</dbReference>
<dbReference type="FunFam" id="3.40.50.300:FF:000004">
    <property type="entry name" value="ATP synthase subunit beta"/>
    <property type="match status" value="1"/>
</dbReference>
<dbReference type="FunFam" id="2.40.10.170:FF:000002">
    <property type="entry name" value="ATP synthase subunit beta, chloroplastic"/>
    <property type="match status" value="1"/>
</dbReference>
<dbReference type="Gene3D" id="2.40.10.170">
    <property type="match status" value="1"/>
</dbReference>
<dbReference type="Gene3D" id="1.10.1140.10">
    <property type="entry name" value="Bovine Mitochondrial F1-atpase, Atp Synthase Beta Chain, Chain D, domain 3"/>
    <property type="match status" value="1"/>
</dbReference>
<dbReference type="Gene3D" id="3.40.50.300">
    <property type="entry name" value="P-loop containing nucleotide triphosphate hydrolases"/>
    <property type="match status" value="1"/>
</dbReference>
<dbReference type="HAMAP" id="MF_01347">
    <property type="entry name" value="ATP_synth_beta_bact"/>
    <property type="match status" value="1"/>
</dbReference>
<dbReference type="InterPro" id="IPR003593">
    <property type="entry name" value="AAA+_ATPase"/>
</dbReference>
<dbReference type="InterPro" id="IPR055190">
    <property type="entry name" value="ATP-synt_VA_C"/>
</dbReference>
<dbReference type="InterPro" id="IPR005722">
    <property type="entry name" value="ATP_synth_F1_bsu"/>
</dbReference>
<dbReference type="InterPro" id="IPR020003">
    <property type="entry name" value="ATPase_a/bsu_AS"/>
</dbReference>
<dbReference type="InterPro" id="IPR050053">
    <property type="entry name" value="ATPase_alpha/beta_chains"/>
</dbReference>
<dbReference type="InterPro" id="IPR004100">
    <property type="entry name" value="ATPase_F1/V1/A1_a/bsu_N"/>
</dbReference>
<dbReference type="InterPro" id="IPR036121">
    <property type="entry name" value="ATPase_F1/V1/A1_a/bsu_N_sf"/>
</dbReference>
<dbReference type="InterPro" id="IPR000194">
    <property type="entry name" value="ATPase_F1/V1/A1_a/bsu_nucl-bd"/>
</dbReference>
<dbReference type="InterPro" id="IPR024034">
    <property type="entry name" value="ATPase_F1/V1_b/a_C"/>
</dbReference>
<dbReference type="InterPro" id="IPR027417">
    <property type="entry name" value="P-loop_NTPase"/>
</dbReference>
<dbReference type="NCBIfam" id="TIGR01039">
    <property type="entry name" value="atpD"/>
    <property type="match status" value="1"/>
</dbReference>
<dbReference type="PANTHER" id="PTHR15184">
    <property type="entry name" value="ATP SYNTHASE"/>
    <property type="match status" value="1"/>
</dbReference>
<dbReference type="PANTHER" id="PTHR15184:SF71">
    <property type="entry name" value="ATP SYNTHASE SUBUNIT BETA, MITOCHONDRIAL"/>
    <property type="match status" value="1"/>
</dbReference>
<dbReference type="Pfam" id="PF00006">
    <property type="entry name" value="ATP-synt_ab"/>
    <property type="match status" value="1"/>
</dbReference>
<dbReference type="Pfam" id="PF02874">
    <property type="entry name" value="ATP-synt_ab_N"/>
    <property type="match status" value="1"/>
</dbReference>
<dbReference type="Pfam" id="PF22919">
    <property type="entry name" value="ATP-synt_VA_C"/>
    <property type="match status" value="1"/>
</dbReference>
<dbReference type="SMART" id="SM00382">
    <property type="entry name" value="AAA"/>
    <property type="match status" value="1"/>
</dbReference>
<dbReference type="SUPFAM" id="SSF47917">
    <property type="entry name" value="C-terminal domain of alpha and beta subunits of F1 ATP synthase"/>
    <property type="match status" value="1"/>
</dbReference>
<dbReference type="SUPFAM" id="SSF50615">
    <property type="entry name" value="N-terminal domain of alpha and beta subunits of F1 ATP synthase"/>
    <property type="match status" value="1"/>
</dbReference>
<dbReference type="SUPFAM" id="SSF52540">
    <property type="entry name" value="P-loop containing nucleoside triphosphate hydrolases"/>
    <property type="match status" value="1"/>
</dbReference>
<dbReference type="PROSITE" id="PS00152">
    <property type="entry name" value="ATPASE_ALPHA_BETA"/>
    <property type="match status" value="1"/>
</dbReference>
<name>ATPB_HYAOR</name>
<accession>Q85V28</accession>
<organism>
    <name type="scientific">Hyacinthus orientalis</name>
    <name type="common">Common hyacinth</name>
    <dbReference type="NCBI Taxonomy" id="82025"/>
    <lineage>
        <taxon>Eukaryota</taxon>
        <taxon>Viridiplantae</taxon>
        <taxon>Streptophyta</taxon>
        <taxon>Embryophyta</taxon>
        <taxon>Tracheophyta</taxon>
        <taxon>Spermatophyta</taxon>
        <taxon>Magnoliopsida</taxon>
        <taxon>Liliopsida</taxon>
        <taxon>Asparagales</taxon>
        <taxon>Hyacinthaceae</taxon>
        <taxon>Hyacinthoideae</taxon>
        <taxon>Hyacintheae</taxon>
        <taxon>Hyacinthus</taxon>
    </lineage>
</organism>
<keyword id="KW-0066">ATP synthesis</keyword>
<keyword id="KW-0067">ATP-binding</keyword>
<keyword id="KW-0139">CF(1)</keyword>
<keyword id="KW-0150">Chloroplast</keyword>
<keyword id="KW-0375">Hydrogen ion transport</keyword>
<keyword id="KW-0406">Ion transport</keyword>
<keyword id="KW-0472">Membrane</keyword>
<keyword id="KW-0547">Nucleotide-binding</keyword>
<keyword id="KW-0934">Plastid</keyword>
<keyword id="KW-0793">Thylakoid</keyword>
<keyword id="KW-1278">Translocase</keyword>
<keyword id="KW-0813">Transport</keyword>
<feature type="chain" id="PRO_0000254483" description="ATP synthase subunit beta, chloroplastic">
    <location>
        <begin position="1"/>
        <end position="495"/>
    </location>
</feature>
<feature type="binding site" evidence="1">
    <location>
        <begin position="172"/>
        <end position="179"/>
    </location>
    <ligand>
        <name>ATP</name>
        <dbReference type="ChEBI" id="CHEBI:30616"/>
    </ligand>
</feature>
<comment type="function">
    <text evidence="1">Produces ATP from ADP in the presence of a proton gradient across the membrane. The catalytic sites are hosted primarily by the beta subunits.</text>
</comment>
<comment type="catalytic activity">
    <reaction evidence="1">
        <text>ATP + H2O + 4 H(+)(in) = ADP + phosphate + 5 H(+)(out)</text>
        <dbReference type="Rhea" id="RHEA:57720"/>
        <dbReference type="ChEBI" id="CHEBI:15377"/>
        <dbReference type="ChEBI" id="CHEBI:15378"/>
        <dbReference type="ChEBI" id="CHEBI:30616"/>
        <dbReference type="ChEBI" id="CHEBI:43474"/>
        <dbReference type="ChEBI" id="CHEBI:456216"/>
        <dbReference type="EC" id="7.1.2.2"/>
    </reaction>
</comment>
<comment type="subunit">
    <text evidence="1">F-type ATPases have 2 components, CF(1) - the catalytic core - and CF(0) - the membrane proton channel. CF(1) has five subunits: alpha(3), beta(3), gamma(1), delta(1), epsilon(1). CF(0) has four main subunits: a(1), b(1), b'(1) and c(9-12).</text>
</comment>
<comment type="subcellular location">
    <subcellularLocation>
        <location evidence="1">Plastid</location>
        <location evidence="1">Chloroplast thylakoid membrane</location>
        <topology evidence="1">Peripheral membrane protein</topology>
    </subcellularLocation>
</comment>
<comment type="similarity">
    <text evidence="1">Belongs to the ATPase alpha/beta chains family.</text>
</comment>
<protein>
    <recommendedName>
        <fullName evidence="1">ATP synthase subunit beta, chloroplastic</fullName>
        <ecNumber evidence="1">7.1.2.2</ecNumber>
    </recommendedName>
    <alternativeName>
        <fullName evidence="1">ATP synthase F1 sector subunit beta</fullName>
    </alternativeName>
    <alternativeName>
        <fullName evidence="1">F-ATPase subunit beta</fullName>
    </alternativeName>
</protein>
<geneLocation type="chloroplast"/>
<sequence length="495" mass="53333">MRINPTTSGSTVSTLEEKNLGRIAQIIGPVLDVVFPPGKMPNIYNALVVKGRDTVGQQINVTCEVQQLLGNNRVRAVAMSATDGLTRGMEVIDTGAALSVPVGGATLGRIFNVLGEPVDNLGPVDTRTTSPIHRSAPAFIQLDTKLSIFETGIKVVDLLAPYRRGGKIGLFGGAGVGKTVLIMELINNIAKAHGGVSVFGGVGERTREGNDLYMEMKESGVINEKNIAESKVALVYGQMNEPPGARMRVGLTALTMAEYFRDVNEQDVLLFIDNIFRFVQAGSEVSALLGRMPSAVGYQPTLSTEMGSLQERITSTKEGSITSIQAVYVPADDLTDPAPATTFAHLDATTVLSRGLSAKGIYPAVDPLDSTSTMLQPRIVGEEHYETAQRVKQTLQRYKELQDIIAILGLDELSEEDRLTVARARKIERFLSQPFFVAEVFTGSPGKYVGLAETIRGFQLILSGELDGLPEQAFYLVGNIDEATAKAMNLEGEKK</sequence>
<proteinExistence type="inferred from homology"/>
<evidence type="ECO:0000255" key="1">
    <source>
        <dbReference type="HAMAP-Rule" id="MF_01347"/>
    </source>
</evidence>